<sequence length="62" mass="6527">MTIAFQLAVFALIATSSILLISVPVVFASPDGWSSNKNVVFSGTSLWIGLVFLVGILNSLIS</sequence>
<proteinExistence type="inferred from homology"/>
<organism>
    <name type="scientific">Citrus sinensis</name>
    <name type="common">Sweet orange</name>
    <name type="synonym">Citrus aurantium var. sinensis</name>
    <dbReference type="NCBI Taxonomy" id="2711"/>
    <lineage>
        <taxon>Eukaryota</taxon>
        <taxon>Viridiplantae</taxon>
        <taxon>Streptophyta</taxon>
        <taxon>Embryophyta</taxon>
        <taxon>Tracheophyta</taxon>
        <taxon>Spermatophyta</taxon>
        <taxon>Magnoliopsida</taxon>
        <taxon>eudicotyledons</taxon>
        <taxon>Gunneridae</taxon>
        <taxon>Pentapetalae</taxon>
        <taxon>rosids</taxon>
        <taxon>malvids</taxon>
        <taxon>Sapindales</taxon>
        <taxon>Rutaceae</taxon>
        <taxon>Aurantioideae</taxon>
        <taxon>Citrus</taxon>
    </lineage>
</organism>
<dbReference type="EMBL" id="DQ864733">
    <property type="protein sequence ID" value="ABI49017.1"/>
    <property type="molecule type" value="Genomic_DNA"/>
</dbReference>
<dbReference type="RefSeq" id="YP_740472.1">
    <property type="nucleotide sequence ID" value="NC_008334.1"/>
</dbReference>
<dbReference type="SMR" id="Q09MI1"/>
<dbReference type="GeneID" id="4271203"/>
<dbReference type="KEGG" id="cit:4271203"/>
<dbReference type="OrthoDB" id="353511at71240"/>
<dbReference type="GO" id="GO:0009535">
    <property type="term" value="C:chloroplast thylakoid membrane"/>
    <property type="evidence" value="ECO:0007669"/>
    <property type="project" value="UniProtKB-SubCell"/>
</dbReference>
<dbReference type="GO" id="GO:0009539">
    <property type="term" value="C:photosystem II reaction center"/>
    <property type="evidence" value="ECO:0007669"/>
    <property type="project" value="InterPro"/>
</dbReference>
<dbReference type="GO" id="GO:0015979">
    <property type="term" value="P:photosynthesis"/>
    <property type="evidence" value="ECO:0007669"/>
    <property type="project" value="UniProtKB-UniRule"/>
</dbReference>
<dbReference type="GO" id="GO:0042549">
    <property type="term" value="P:photosystem II stabilization"/>
    <property type="evidence" value="ECO:0007669"/>
    <property type="project" value="InterPro"/>
</dbReference>
<dbReference type="FunFam" id="1.10.287.740:FF:000001">
    <property type="entry name" value="Photosystem II reaction center protein Z"/>
    <property type="match status" value="1"/>
</dbReference>
<dbReference type="Gene3D" id="1.10.287.740">
    <property type="entry name" value="Photosystem II PsbZ, reaction centre"/>
    <property type="match status" value="1"/>
</dbReference>
<dbReference type="HAMAP" id="MF_00644">
    <property type="entry name" value="PSII_PsbZ"/>
    <property type="match status" value="1"/>
</dbReference>
<dbReference type="InterPro" id="IPR002644">
    <property type="entry name" value="PSII_PsbZ"/>
</dbReference>
<dbReference type="InterPro" id="IPR036512">
    <property type="entry name" value="PSII_PsbZ_sf"/>
</dbReference>
<dbReference type="NCBIfam" id="TIGR03043">
    <property type="entry name" value="PS_II_psbZ"/>
    <property type="match status" value="1"/>
</dbReference>
<dbReference type="PANTHER" id="PTHR34971">
    <property type="entry name" value="PHOTOSYSTEM II REACTION CENTER PROTEIN Z"/>
    <property type="match status" value="1"/>
</dbReference>
<dbReference type="PANTHER" id="PTHR34971:SF2">
    <property type="entry name" value="PHOTOSYSTEM II REACTION CENTER PROTEIN Z"/>
    <property type="match status" value="1"/>
</dbReference>
<dbReference type="Pfam" id="PF01737">
    <property type="entry name" value="Ycf9"/>
    <property type="match status" value="1"/>
</dbReference>
<dbReference type="SUPFAM" id="SSF161055">
    <property type="entry name" value="PsbZ-like"/>
    <property type="match status" value="1"/>
</dbReference>
<geneLocation type="chloroplast"/>
<feature type="chain" id="PRO_0000277211" description="Photosystem II reaction center protein Z">
    <location>
        <begin position="1"/>
        <end position="62"/>
    </location>
</feature>
<feature type="transmembrane region" description="Helical" evidence="1">
    <location>
        <begin position="8"/>
        <end position="28"/>
    </location>
</feature>
<feature type="transmembrane region" description="Helical" evidence="1">
    <location>
        <begin position="41"/>
        <end position="61"/>
    </location>
</feature>
<comment type="function">
    <text evidence="1">May control the interaction of photosystem II (PSII) cores with the light-harvesting antenna, regulates electron flow through the 2 photosystem reaction centers. PSII is a light-driven water plastoquinone oxidoreductase, using light energy to abstract electrons from H(2)O, generating a proton gradient subsequently used for ATP formation.</text>
</comment>
<comment type="subunit">
    <text evidence="1">PSII is composed of 1 copy each of membrane proteins PsbA, PsbB, PsbC, PsbD, PsbE, PsbF, PsbH, PsbI, PsbJ, PsbK, PsbL, PsbM, PsbT, PsbY, PsbZ, Psb30/Ycf12, at least 3 peripheral proteins of the oxygen-evolving complex and a large number of cofactors. It forms dimeric complexes.</text>
</comment>
<comment type="subcellular location">
    <subcellularLocation>
        <location evidence="1">Plastid</location>
        <location evidence="1">Chloroplast thylakoid membrane</location>
        <topology evidence="1">Multi-pass membrane protein</topology>
    </subcellularLocation>
</comment>
<comment type="similarity">
    <text evidence="1">Belongs to the PsbZ family.</text>
</comment>
<name>PSBZ_CITSI</name>
<protein>
    <recommendedName>
        <fullName evidence="1">Photosystem II reaction center protein Z</fullName>
        <shortName evidence="1">PSII-Z</shortName>
    </recommendedName>
</protein>
<accession>Q09MI1</accession>
<gene>
    <name evidence="1" type="primary">psbZ</name>
</gene>
<keyword id="KW-0150">Chloroplast</keyword>
<keyword id="KW-0472">Membrane</keyword>
<keyword id="KW-0602">Photosynthesis</keyword>
<keyword id="KW-0604">Photosystem II</keyword>
<keyword id="KW-0934">Plastid</keyword>
<keyword id="KW-0674">Reaction center</keyword>
<keyword id="KW-0793">Thylakoid</keyword>
<keyword id="KW-0812">Transmembrane</keyword>
<keyword id="KW-1133">Transmembrane helix</keyword>
<evidence type="ECO:0000255" key="1">
    <source>
        <dbReference type="HAMAP-Rule" id="MF_00644"/>
    </source>
</evidence>
<reference key="1">
    <citation type="journal article" date="2006" name="BMC Plant Biol.">
        <title>The complete chloroplast genome sequence of Citrus sinensis (L.) Osbeck var 'Ridge Pineapple': organization and phylogenetic relationships to other angiosperms.</title>
        <authorList>
            <person name="Bausher M.G."/>
            <person name="Singh N.D."/>
            <person name="Lee S.-B."/>
            <person name="Jansen R.K."/>
            <person name="Daniell H."/>
        </authorList>
    </citation>
    <scope>NUCLEOTIDE SEQUENCE [LARGE SCALE GENOMIC DNA]</scope>
    <source>
        <strain>cv. Osbeck var. Ridge Pineapple</strain>
    </source>
</reference>